<sequence length="229" mass="26679">MATTSTGPLHPYWPRHLRLDHFVPNDLSAWYIVTVLFTVFGALVVTMWLLSSRASVVPLGTWRRLSVCWFAVCAFVHLVIEGWFVLYQKAILGDQAFLSQLWKEYAKGDSRYIIEDNFIICMESITVVLWGPLSLWAVIAFLRQHPSRYVLQFVISLGQIYGDLLYFLTEYRDGFQHGEMGHPIYFWFYFFFMNVLWLVIPGVLFFDSVKQFYGAQNALDTKVMKSKGK</sequence>
<proteinExistence type="evidence at protein level"/>
<name>EBP_CAVPO</name>
<reference key="1">
    <citation type="journal article" date="1995" name="J. Biol. Chem.">
        <title>Phenylalkylamine Ca2+ antagonist binding protein. Molecular cloning, tissue distribution, and heterologous expression.</title>
        <authorList>
            <person name="Hanner M."/>
            <person name="Moebius F.F."/>
            <person name="Weber F."/>
            <person name="Grabner M."/>
            <person name="Striessnig J."/>
            <person name="Glossmann H."/>
        </authorList>
    </citation>
    <scope>NUCLEOTIDE SEQUENCE [MRNA]</scope>
    <source>
        <strain>Pirbright white</strain>
        <tissue>Liver</tissue>
    </source>
</reference>
<reference key="2">
    <citation type="journal article" date="1994" name="J. Biol. Chem.">
        <title>Purification and amino-terminal sequencing of the high affinity phenylalkylamine Ca2+ antagonist binding protein from guinea pig liver endoplasmic reticulum.</title>
        <authorList>
            <person name="Moebius F.F."/>
            <person name="Hanner M."/>
            <person name="Knaus H.G."/>
            <person name="Weber F."/>
            <person name="Striessnig J."/>
            <person name="Glossmann H."/>
        </authorList>
    </citation>
    <scope>PROTEIN SEQUENCE OF 2-34</scope>
    <scope>SUBCELLULAR LOCATION</scope>
    <source>
        <tissue>Liver</tissue>
    </source>
</reference>
<accession>Q60490</accession>
<accession>Q9QV23</accession>
<organism>
    <name type="scientific">Cavia porcellus</name>
    <name type="common">Guinea pig</name>
    <dbReference type="NCBI Taxonomy" id="10141"/>
    <lineage>
        <taxon>Eukaryota</taxon>
        <taxon>Metazoa</taxon>
        <taxon>Chordata</taxon>
        <taxon>Craniata</taxon>
        <taxon>Vertebrata</taxon>
        <taxon>Euteleostomi</taxon>
        <taxon>Mammalia</taxon>
        <taxon>Eutheria</taxon>
        <taxon>Euarchontoglires</taxon>
        <taxon>Glires</taxon>
        <taxon>Rodentia</taxon>
        <taxon>Hystricomorpha</taxon>
        <taxon>Caviidae</taxon>
        <taxon>Cavia</taxon>
    </lineage>
</organism>
<feature type="initiator methionine" description="Removed" evidence="4">
    <location>
        <position position="1"/>
    </location>
</feature>
<feature type="chain" id="PRO_0000174341" description="3-beta-hydroxysteroid-Delta(8),Delta(7)-isomerase">
    <location>
        <begin position="2"/>
        <end position="229"/>
    </location>
</feature>
<feature type="transmembrane region" description="Helical" evidence="2">
    <location>
        <begin position="30"/>
        <end position="50"/>
    </location>
</feature>
<feature type="transmembrane region" description="Helical" evidence="2">
    <location>
        <begin position="67"/>
        <end position="87"/>
    </location>
</feature>
<feature type="transmembrane region" description="Helical" evidence="2">
    <location>
        <begin position="119"/>
        <end position="139"/>
    </location>
</feature>
<feature type="transmembrane region" description="Helical" evidence="2">
    <location>
        <begin position="186"/>
        <end position="206"/>
    </location>
</feature>
<feature type="domain" description="EXPERA" evidence="3">
    <location>
        <begin position="62"/>
        <end position="205"/>
    </location>
</feature>
<feature type="sequence conflict" description="In Ref. 2; AA sequence." evidence="5" ref="2">
    <original>L</original>
    <variation>Y</variation>
    <location>
        <position position="27"/>
    </location>
</feature>
<feature type="sequence conflict" description="In Ref. 2; AA sequence." evidence="5" ref="2">
    <original>Y</original>
    <variation>V</variation>
    <location>
        <position position="31"/>
    </location>
</feature>
<keyword id="KW-0152">Cholesterol biosynthesis</keyword>
<keyword id="KW-0153">Cholesterol metabolism</keyword>
<keyword id="KW-0968">Cytoplasmic vesicle</keyword>
<keyword id="KW-0903">Direct protein sequencing</keyword>
<keyword id="KW-0256">Endoplasmic reticulum</keyword>
<keyword id="KW-0378">Hydrolase</keyword>
<keyword id="KW-0413">Isomerase</keyword>
<keyword id="KW-0444">Lipid biosynthesis</keyword>
<keyword id="KW-0443">Lipid metabolism</keyword>
<keyword id="KW-0472">Membrane</keyword>
<keyword id="KW-0539">Nucleus</keyword>
<keyword id="KW-1185">Reference proteome</keyword>
<keyword id="KW-0752">Steroid biosynthesis</keyword>
<keyword id="KW-0753">Steroid metabolism</keyword>
<keyword id="KW-0756">Sterol biosynthesis</keyword>
<keyword id="KW-1207">Sterol metabolism</keyword>
<keyword id="KW-0812">Transmembrane</keyword>
<keyword id="KW-1133">Transmembrane helix</keyword>
<evidence type="ECO:0000250" key="1">
    <source>
        <dbReference type="UniProtKB" id="Q15125"/>
    </source>
</evidence>
<evidence type="ECO:0000255" key="2"/>
<evidence type="ECO:0000255" key="3">
    <source>
        <dbReference type="PROSITE-ProRule" id="PRU01087"/>
    </source>
</evidence>
<evidence type="ECO:0000269" key="4">
    <source>
    </source>
</evidence>
<evidence type="ECO:0000305" key="5"/>
<evidence type="ECO:0000305" key="6">
    <source>
    </source>
</evidence>
<gene>
    <name type="primary">EBP</name>
</gene>
<comment type="function">
    <text evidence="1">Isomerase that catalyzes the conversion of Delta(8)-sterols to their corresponding Delta(7)-isomers.</text>
</comment>
<comment type="function">
    <text evidence="1">Component of the microsomal antiestrogen binding site (AEBS), a multiproteic complex at the ER membrane that consists of an association between EBP and 7-dehydrocholesterol reductase/DHCR7. This complex is responsible for cholesterol-5,6-epoxide hydrolase (ChEH) activity, which consists in the hydration of cholesterol-5,6-epoxides (5,6-EC) into cholestane-3beta,5alpha,6beta-triol (CT). The precise role of each component of this complex has not been described yet.</text>
</comment>
<comment type="catalytic activity">
    <reaction evidence="1">
        <text>lathosterol = 5alpha-cholest-8-en-3beta-ol</text>
        <dbReference type="Rhea" id="RHEA:15281"/>
        <dbReference type="ChEBI" id="CHEBI:16608"/>
        <dbReference type="ChEBI" id="CHEBI:17168"/>
        <dbReference type="EC" id="5.3.3.5"/>
    </reaction>
    <physiologicalReaction direction="left-to-right" evidence="1">
        <dbReference type="Rhea" id="RHEA:15282"/>
    </physiologicalReaction>
</comment>
<comment type="catalytic activity">
    <reaction evidence="1">
        <text>zymosterol = 5alpha-cholesta-7,24-dien-3beta-ol</text>
        <dbReference type="Rhea" id="RHEA:33999"/>
        <dbReference type="ChEBI" id="CHEBI:16290"/>
        <dbReference type="ChEBI" id="CHEBI:18252"/>
    </reaction>
    <physiologicalReaction direction="left-to-right" evidence="1">
        <dbReference type="Rhea" id="RHEA:34000"/>
    </physiologicalReaction>
</comment>
<comment type="catalytic activity">
    <reaction evidence="1">
        <text>5,6alpha-epoxy-5alpha-cholestan-3beta-ol + H2O = 5alpha-cholestane-3beta,5,6beta-triol</text>
        <dbReference type="Rhea" id="RHEA:11964"/>
        <dbReference type="ChEBI" id="CHEBI:15377"/>
        <dbReference type="ChEBI" id="CHEBI:28082"/>
        <dbReference type="ChEBI" id="CHEBI:49305"/>
        <dbReference type="EC" id="3.3.2.11"/>
    </reaction>
    <physiologicalReaction direction="left-to-right" evidence="1">
        <dbReference type="Rhea" id="RHEA:11965"/>
    </physiologicalReaction>
</comment>
<comment type="catalytic activity">
    <reaction evidence="1">
        <text>5,6beta-epoxy-5beta-cholestan-3beta-ol + H2O = 5alpha-cholestane-3beta,5,6beta-triol</text>
        <dbReference type="Rhea" id="RHEA:15113"/>
        <dbReference type="ChEBI" id="CHEBI:15377"/>
        <dbReference type="ChEBI" id="CHEBI:28082"/>
        <dbReference type="ChEBI" id="CHEBI:28164"/>
        <dbReference type="EC" id="3.3.2.11"/>
    </reaction>
    <physiologicalReaction direction="left-to-right" evidence="1">
        <dbReference type="Rhea" id="RHEA:15114"/>
    </physiologicalReaction>
</comment>
<comment type="pathway">
    <text evidence="1">Steroid biosynthesis; cholesterol biosynthesis.</text>
</comment>
<comment type="subcellular location">
    <subcellularLocation>
        <location evidence="4">Endoplasmic reticulum membrane</location>
        <topology evidence="6">Multi-pass membrane protein</topology>
    </subcellularLocation>
    <subcellularLocation>
        <location evidence="1">Nucleus envelope</location>
    </subcellularLocation>
    <subcellularLocation>
        <location evidence="1">Cytoplasmic vesicle</location>
    </subcellularLocation>
    <text evidence="1">During interphase, detected on the endoplasmic reticulum and the nuclear envelope. During mitosis, detected on cytoplasmic vesicles.</text>
</comment>
<comment type="tissue specificity">
    <text>Highly expressed in liver, bowel, adrenal gland, testis, ovary, and uterus and less expressed in brain, cerebellum, skeletal muscle, and heart.</text>
</comment>
<comment type="miscellaneous">
    <text>Binds to the phenylalkylamine calcium-ion antagonist emopamil, an anti-ischemic drug.</text>
</comment>
<comment type="similarity">
    <text evidence="5">Belongs to the EBP family.</text>
</comment>
<protein>
    <recommendedName>
        <fullName evidence="1">3-beta-hydroxysteroid-Delta(8),Delta(7)-isomerase</fullName>
        <ecNumber evidence="1">5.3.3.5</ecNumber>
    </recommendedName>
    <alternativeName>
        <fullName>Cholestenol Delta-isomerase</fullName>
    </alternativeName>
    <alternativeName>
        <fullName evidence="1">Cholesterol-5,6-epoxide hydrolase subunit EBP</fullName>
        <ecNumber evidence="1">3.3.2.11</ecNumber>
    </alternativeName>
    <alternativeName>
        <fullName>Delta(8)-Delta(7) sterol isomerase</fullName>
        <shortName>D8-D7 sterol isomerase</shortName>
    </alternativeName>
    <alternativeName>
        <fullName>Emopamil-binding protein</fullName>
    </alternativeName>
</protein>
<dbReference type="EC" id="5.3.3.5" evidence="1"/>
<dbReference type="EC" id="3.3.2.11" evidence="1"/>
<dbReference type="EMBL" id="Z37985">
    <property type="protein sequence ID" value="CAA86067.1"/>
    <property type="molecule type" value="mRNA"/>
</dbReference>
<dbReference type="PIR" id="A56122">
    <property type="entry name" value="A56122"/>
</dbReference>
<dbReference type="RefSeq" id="NP_001166416.1">
    <property type="nucleotide sequence ID" value="NM_001172945.1"/>
</dbReference>
<dbReference type="SMR" id="Q60490"/>
<dbReference type="FunCoup" id="Q60490">
    <property type="interactions" value="655"/>
</dbReference>
<dbReference type="STRING" id="10141.ENSCPOP00000012749"/>
<dbReference type="BindingDB" id="Q60490"/>
<dbReference type="ChEMBL" id="CHEMBL5525"/>
<dbReference type="DrugCentral" id="Q60490"/>
<dbReference type="Ensembl" id="ENSCPOT00000014293.3">
    <property type="protein sequence ID" value="ENSCPOP00000012749.2"/>
    <property type="gene ID" value="ENSCPOG00000014151.4"/>
</dbReference>
<dbReference type="GeneID" id="100135518"/>
<dbReference type="KEGG" id="cpoc:100135518"/>
<dbReference type="CTD" id="10682"/>
<dbReference type="VEuPathDB" id="HostDB:ENSCPOG00000014151"/>
<dbReference type="eggNOG" id="KOG4826">
    <property type="taxonomic scope" value="Eukaryota"/>
</dbReference>
<dbReference type="GeneTree" id="ENSGT00530000063715"/>
<dbReference type="HOGENOM" id="CLU_072128_0_0_1"/>
<dbReference type="InParanoid" id="Q60490"/>
<dbReference type="OMA" id="VIEGWFC"/>
<dbReference type="OrthoDB" id="58557at2759"/>
<dbReference type="TreeFam" id="TF314716"/>
<dbReference type="BRENDA" id="5.3.3.5">
    <property type="organism ID" value="1225"/>
</dbReference>
<dbReference type="UniPathway" id="UPA00063"/>
<dbReference type="PRO" id="PR:Q60490"/>
<dbReference type="Proteomes" id="UP000005447">
    <property type="component" value="Unassembled WGS sequence"/>
</dbReference>
<dbReference type="Bgee" id="ENSCPOG00000014151">
    <property type="expression patterns" value="Expressed in adrenal gland and 13 other cell types or tissues"/>
</dbReference>
<dbReference type="GO" id="GO:0031410">
    <property type="term" value="C:cytoplasmic vesicle"/>
    <property type="evidence" value="ECO:0007669"/>
    <property type="project" value="UniProtKB-KW"/>
</dbReference>
<dbReference type="GO" id="GO:0005783">
    <property type="term" value="C:endoplasmic reticulum"/>
    <property type="evidence" value="ECO:0000250"/>
    <property type="project" value="UniProtKB"/>
</dbReference>
<dbReference type="GO" id="GO:0005789">
    <property type="term" value="C:endoplasmic reticulum membrane"/>
    <property type="evidence" value="ECO:0007669"/>
    <property type="project" value="UniProtKB-SubCell"/>
</dbReference>
<dbReference type="GO" id="GO:0043231">
    <property type="term" value="C:intracellular membrane-bounded organelle"/>
    <property type="evidence" value="ECO:0000250"/>
    <property type="project" value="UniProtKB"/>
</dbReference>
<dbReference type="GO" id="GO:0005635">
    <property type="term" value="C:nuclear envelope"/>
    <property type="evidence" value="ECO:0000250"/>
    <property type="project" value="UniProtKB"/>
</dbReference>
<dbReference type="GO" id="GO:0031965">
    <property type="term" value="C:nuclear membrane"/>
    <property type="evidence" value="ECO:0007669"/>
    <property type="project" value="Ensembl"/>
</dbReference>
<dbReference type="GO" id="GO:0000247">
    <property type="term" value="F:C-8 sterol isomerase activity"/>
    <property type="evidence" value="ECO:0000250"/>
    <property type="project" value="UniProtKB"/>
</dbReference>
<dbReference type="GO" id="GO:0047750">
    <property type="term" value="F:cholestenol delta-isomerase activity"/>
    <property type="evidence" value="ECO:0007669"/>
    <property type="project" value="UniProtKB-EC"/>
</dbReference>
<dbReference type="GO" id="GO:0033963">
    <property type="term" value="F:cholesterol-5,6-oxide hydrolase activity"/>
    <property type="evidence" value="ECO:0000250"/>
    <property type="project" value="UniProtKB"/>
</dbReference>
<dbReference type="GO" id="GO:0042802">
    <property type="term" value="F:identical protein binding"/>
    <property type="evidence" value="ECO:0007669"/>
    <property type="project" value="Ensembl"/>
</dbReference>
<dbReference type="GO" id="GO:0004769">
    <property type="term" value="F:steroid Delta-isomerase activity"/>
    <property type="evidence" value="ECO:0000250"/>
    <property type="project" value="UniProtKB"/>
</dbReference>
<dbReference type="GO" id="GO:0006695">
    <property type="term" value="P:cholesterol biosynthetic process"/>
    <property type="evidence" value="ECO:0000250"/>
    <property type="project" value="UniProtKB"/>
</dbReference>
<dbReference type="GO" id="GO:0030097">
    <property type="term" value="P:hemopoiesis"/>
    <property type="evidence" value="ECO:0007669"/>
    <property type="project" value="Ensembl"/>
</dbReference>
<dbReference type="GO" id="GO:0043931">
    <property type="term" value="P:ossification involved in bone maturation"/>
    <property type="evidence" value="ECO:0007669"/>
    <property type="project" value="Ensembl"/>
</dbReference>
<dbReference type="InterPro" id="IPR007905">
    <property type="entry name" value="EBP"/>
</dbReference>
<dbReference type="InterPro" id="IPR033118">
    <property type="entry name" value="EXPERA"/>
</dbReference>
<dbReference type="PANTHER" id="PTHR14207:SF0">
    <property type="entry name" value="3-BETA-HYDROXYSTEROID-DELTA(8),DELTA(7)-ISOMERASE"/>
    <property type="match status" value="1"/>
</dbReference>
<dbReference type="PANTHER" id="PTHR14207">
    <property type="entry name" value="STEROL ISOMERASE"/>
    <property type="match status" value="1"/>
</dbReference>
<dbReference type="Pfam" id="PF05241">
    <property type="entry name" value="EBP"/>
    <property type="match status" value="1"/>
</dbReference>
<dbReference type="PROSITE" id="PS51751">
    <property type="entry name" value="EXPERA"/>
    <property type="match status" value="1"/>
</dbReference>